<proteinExistence type="inferred from homology"/>
<reference key="1">
    <citation type="journal article" date="2007" name="Nat. Biotechnol.">
        <title>Complete genome sequence of the fish pathogen Flavobacterium psychrophilum.</title>
        <authorList>
            <person name="Duchaud E."/>
            <person name="Boussaha M."/>
            <person name="Loux V."/>
            <person name="Bernardet J.-F."/>
            <person name="Michel C."/>
            <person name="Kerouault B."/>
            <person name="Mondot S."/>
            <person name="Nicolas P."/>
            <person name="Bossy R."/>
            <person name="Caron C."/>
            <person name="Bessieres P."/>
            <person name="Gibrat J.-F."/>
            <person name="Claverol S."/>
            <person name="Dumetz F."/>
            <person name="Le Henaff M."/>
            <person name="Benmansour A."/>
        </authorList>
    </citation>
    <scope>NUCLEOTIDE SEQUENCE [LARGE SCALE GENOMIC DNA]</scope>
    <source>
        <strain>ATCC 49511 / DSM 21280 / CIP 103535 / JIP02/86</strain>
    </source>
</reference>
<gene>
    <name evidence="1" type="primary">katG</name>
    <name type="ordered locus">FP1730</name>
</gene>
<evidence type="ECO:0000255" key="1">
    <source>
        <dbReference type="HAMAP-Rule" id="MF_01961"/>
    </source>
</evidence>
<evidence type="ECO:0000256" key="2">
    <source>
        <dbReference type="SAM" id="MobiDB-lite"/>
    </source>
</evidence>
<keyword id="KW-0349">Heme</keyword>
<keyword id="KW-0376">Hydrogen peroxide</keyword>
<keyword id="KW-0408">Iron</keyword>
<keyword id="KW-0479">Metal-binding</keyword>
<keyword id="KW-0560">Oxidoreductase</keyword>
<keyword id="KW-0575">Peroxidase</keyword>
<keyword id="KW-1185">Reference proteome</keyword>
<organism>
    <name type="scientific">Flavobacterium psychrophilum (strain ATCC 49511 / DSM 21280 / CIP 103535 / JIP02/86)</name>
    <dbReference type="NCBI Taxonomy" id="402612"/>
    <lineage>
        <taxon>Bacteria</taxon>
        <taxon>Pseudomonadati</taxon>
        <taxon>Bacteroidota</taxon>
        <taxon>Flavobacteriia</taxon>
        <taxon>Flavobacteriales</taxon>
        <taxon>Flavobacteriaceae</taxon>
        <taxon>Flavobacterium</taxon>
    </lineage>
</organism>
<dbReference type="EC" id="1.11.1.21" evidence="1"/>
<dbReference type="EMBL" id="AM398681">
    <property type="protein sequence ID" value="CAL43797.1"/>
    <property type="molecule type" value="Genomic_DNA"/>
</dbReference>
<dbReference type="RefSeq" id="WP_011963840.1">
    <property type="nucleotide sequence ID" value="NC_009613.3"/>
</dbReference>
<dbReference type="RefSeq" id="YP_001296604.1">
    <property type="nucleotide sequence ID" value="NC_009613.3"/>
</dbReference>
<dbReference type="SMR" id="A6H0C4"/>
<dbReference type="STRING" id="402612.FP1730"/>
<dbReference type="EnsemblBacteria" id="CAL43797">
    <property type="protein sequence ID" value="CAL43797"/>
    <property type="gene ID" value="FP1730"/>
</dbReference>
<dbReference type="GeneID" id="66552083"/>
<dbReference type="KEGG" id="fps:FP1730"/>
<dbReference type="PATRIC" id="fig|402612.5.peg.1747"/>
<dbReference type="eggNOG" id="COG0376">
    <property type="taxonomic scope" value="Bacteria"/>
</dbReference>
<dbReference type="HOGENOM" id="CLU_025424_2_0_10"/>
<dbReference type="OrthoDB" id="9759743at2"/>
<dbReference type="Proteomes" id="UP000006394">
    <property type="component" value="Chromosome"/>
</dbReference>
<dbReference type="GO" id="GO:0005829">
    <property type="term" value="C:cytosol"/>
    <property type="evidence" value="ECO:0007669"/>
    <property type="project" value="TreeGrafter"/>
</dbReference>
<dbReference type="GO" id="GO:0004096">
    <property type="term" value="F:catalase activity"/>
    <property type="evidence" value="ECO:0007669"/>
    <property type="project" value="UniProtKB-UniRule"/>
</dbReference>
<dbReference type="GO" id="GO:0020037">
    <property type="term" value="F:heme binding"/>
    <property type="evidence" value="ECO:0007669"/>
    <property type="project" value="InterPro"/>
</dbReference>
<dbReference type="GO" id="GO:0046872">
    <property type="term" value="F:metal ion binding"/>
    <property type="evidence" value="ECO:0007669"/>
    <property type="project" value="UniProtKB-KW"/>
</dbReference>
<dbReference type="GO" id="GO:0070301">
    <property type="term" value="P:cellular response to hydrogen peroxide"/>
    <property type="evidence" value="ECO:0007669"/>
    <property type="project" value="TreeGrafter"/>
</dbReference>
<dbReference type="GO" id="GO:0042744">
    <property type="term" value="P:hydrogen peroxide catabolic process"/>
    <property type="evidence" value="ECO:0007669"/>
    <property type="project" value="UniProtKB-KW"/>
</dbReference>
<dbReference type="CDD" id="cd00649">
    <property type="entry name" value="catalase_peroxidase_1"/>
    <property type="match status" value="1"/>
</dbReference>
<dbReference type="CDD" id="cd08200">
    <property type="entry name" value="catalase_peroxidase_2"/>
    <property type="match status" value="1"/>
</dbReference>
<dbReference type="FunFam" id="1.10.420.10:FF:000002">
    <property type="entry name" value="Catalase-peroxidase"/>
    <property type="match status" value="1"/>
</dbReference>
<dbReference type="FunFam" id="1.10.420.10:FF:000004">
    <property type="entry name" value="Catalase-peroxidase"/>
    <property type="match status" value="1"/>
</dbReference>
<dbReference type="FunFam" id="1.10.520.10:FF:000002">
    <property type="entry name" value="Catalase-peroxidase"/>
    <property type="match status" value="1"/>
</dbReference>
<dbReference type="Gene3D" id="1.10.520.10">
    <property type="match status" value="2"/>
</dbReference>
<dbReference type="Gene3D" id="1.10.420.10">
    <property type="entry name" value="Peroxidase, domain 2"/>
    <property type="match status" value="2"/>
</dbReference>
<dbReference type="HAMAP" id="MF_01961">
    <property type="entry name" value="Catal_peroxid"/>
    <property type="match status" value="1"/>
</dbReference>
<dbReference type="InterPro" id="IPR000763">
    <property type="entry name" value="Catalase_peroxidase"/>
</dbReference>
<dbReference type="InterPro" id="IPR002016">
    <property type="entry name" value="Haem_peroxidase"/>
</dbReference>
<dbReference type="InterPro" id="IPR010255">
    <property type="entry name" value="Haem_peroxidase_sf"/>
</dbReference>
<dbReference type="InterPro" id="IPR019794">
    <property type="entry name" value="Peroxidases_AS"/>
</dbReference>
<dbReference type="InterPro" id="IPR019793">
    <property type="entry name" value="Peroxidases_heam-ligand_BS"/>
</dbReference>
<dbReference type="NCBIfam" id="TIGR00198">
    <property type="entry name" value="cat_per_HPI"/>
    <property type="match status" value="1"/>
</dbReference>
<dbReference type="NCBIfam" id="NF011635">
    <property type="entry name" value="PRK15061.1"/>
    <property type="match status" value="1"/>
</dbReference>
<dbReference type="PANTHER" id="PTHR30555:SF0">
    <property type="entry name" value="CATALASE-PEROXIDASE"/>
    <property type="match status" value="1"/>
</dbReference>
<dbReference type="PANTHER" id="PTHR30555">
    <property type="entry name" value="HYDROPEROXIDASE I, BIFUNCTIONAL CATALASE-PEROXIDASE"/>
    <property type="match status" value="1"/>
</dbReference>
<dbReference type="Pfam" id="PF00141">
    <property type="entry name" value="peroxidase"/>
    <property type="match status" value="2"/>
</dbReference>
<dbReference type="PRINTS" id="PR00460">
    <property type="entry name" value="BPEROXIDASE"/>
</dbReference>
<dbReference type="PRINTS" id="PR00458">
    <property type="entry name" value="PEROXIDASE"/>
</dbReference>
<dbReference type="SUPFAM" id="SSF48113">
    <property type="entry name" value="Heme-dependent peroxidases"/>
    <property type="match status" value="2"/>
</dbReference>
<dbReference type="PROSITE" id="PS00435">
    <property type="entry name" value="PEROXIDASE_1"/>
    <property type="match status" value="1"/>
</dbReference>
<dbReference type="PROSITE" id="PS00436">
    <property type="entry name" value="PEROXIDASE_2"/>
    <property type="match status" value="1"/>
</dbReference>
<dbReference type="PROSITE" id="PS50873">
    <property type="entry name" value="PEROXIDASE_4"/>
    <property type="match status" value="1"/>
</dbReference>
<accession>A6H0C4</accession>
<protein>
    <recommendedName>
        <fullName evidence="1">Catalase-peroxidase</fullName>
        <shortName evidence="1">CP</shortName>
        <ecNumber evidence="1">1.11.1.21</ecNumber>
    </recommendedName>
    <alternativeName>
        <fullName evidence="1">Peroxidase/catalase</fullName>
    </alternativeName>
</protein>
<name>KATG_FLAPJ</name>
<comment type="function">
    <text evidence="1">Bifunctional enzyme with both catalase and broad-spectrum peroxidase activity.</text>
</comment>
<comment type="catalytic activity">
    <reaction evidence="1">
        <text>H2O2 + AH2 = A + 2 H2O</text>
        <dbReference type="Rhea" id="RHEA:30275"/>
        <dbReference type="ChEBI" id="CHEBI:13193"/>
        <dbReference type="ChEBI" id="CHEBI:15377"/>
        <dbReference type="ChEBI" id="CHEBI:16240"/>
        <dbReference type="ChEBI" id="CHEBI:17499"/>
        <dbReference type="EC" id="1.11.1.21"/>
    </reaction>
</comment>
<comment type="catalytic activity">
    <reaction evidence="1">
        <text>2 H2O2 = O2 + 2 H2O</text>
        <dbReference type="Rhea" id="RHEA:20309"/>
        <dbReference type="ChEBI" id="CHEBI:15377"/>
        <dbReference type="ChEBI" id="CHEBI:15379"/>
        <dbReference type="ChEBI" id="CHEBI:16240"/>
        <dbReference type="EC" id="1.11.1.21"/>
    </reaction>
</comment>
<comment type="cofactor">
    <cofactor evidence="1">
        <name>heme b</name>
        <dbReference type="ChEBI" id="CHEBI:60344"/>
    </cofactor>
    <text evidence="1">Binds 1 heme b (iron(II)-protoporphyrin IX) group per dimer.</text>
</comment>
<comment type="subunit">
    <text evidence="1">Homodimer or homotetramer.</text>
</comment>
<comment type="PTM">
    <text evidence="1">Formation of the three residue Trp-Tyr-Met cross-link is important for the catalase, but not the peroxidase activity of the enzyme.</text>
</comment>
<comment type="similarity">
    <text evidence="1">Belongs to the peroxidase family. Peroxidase/catalase subfamily.</text>
</comment>
<sequence length="735" mass="81010">MENNTNPISGQGKCPFSGGAAKQSAGAGTRNSNWWPNQLKLNILRQYSSLSNPMGEEFNYAAAFKSLDLITLKKDISDLMTNSQDWWPADYGHYGPFFIRMAWHSAGTYRVADGRGGAGFGMQRFAPLNSWPDNVNLDKARLLLWPIKQKYGKKISWADLMILAGNCALESMGFKTFGFAGGREDVWEPAEDIYWGSEGKWLDDQRYSGDRELENPLAAVQMGLIYVNPEGPNGNPDPLASARDIRETFARMAMNDEETVALVAGGHTFGKTHGAADPNQYVSAEPAAASIEEQGLGWKNTFGSGSGEHTISSGLEGAWTTTPAKWSHNYLENLFGFEWELTKSPAGAHQWKPKNGAGAGTVPDAHNSSKSHAPTMLTADLALRADPIYEKISRRFLENPAEFEEAFARAWFKLTHRDMGPVARYLGSDVPKEVLIWQDPIPAVNHQLIDDNDITILKAKILDAGFSVSEMVSTAWASASTFRGSDKRGGANGARICLAPQKDWKVNNPIQLSKVLDALKEIQVTFNNAQSIGKQVSIADLIVLTGCVGIEKAAKNIKVPFTPGRTDALQEQTDVASFAVLEPEADGFRNYMKTQYTVSAEEMLIDKAQLLTLTAPELTVLIGGLRVLDVNFNQSKNGLFTNRSGELTNDFFVNLLDFGTTWKASSESQDIFEGRNRKTGELKWTGTRVDLIFGSNSELRALAEVYGCTDSQEKFVKDFVKAWDKVMNLDRFDLV</sequence>
<feature type="chain" id="PRO_0000354788" description="Catalase-peroxidase">
    <location>
        <begin position="1"/>
        <end position="735"/>
    </location>
</feature>
<feature type="region of interest" description="Disordered" evidence="2">
    <location>
        <begin position="1"/>
        <end position="31"/>
    </location>
</feature>
<feature type="region of interest" description="Disordered" evidence="2">
    <location>
        <begin position="352"/>
        <end position="371"/>
    </location>
</feature>
<feature type="compositionally biased region" description="Low complexity" evidence="2">
    <location>
        <begin position="17"/>
        <end position="28"/>
    </location>
</feature>
<feature type="active site" description="Proton acceptor" evidence="1">
    <location>
        <position position="104"/>
    </location>
</feature>
<feature type="binding site" description="axial binding residue" evidence="1">
    <location>
        <position position="267"/>
    </location>
    <ligand>
        <name>heme b</name>
        <dbReference type="ChEBI" id="CHEBI:60344"/>
    </ligand>
    <ligandPart>
        <name>Fe</name>
        <dbReference type="ChEBI" id="CHEBI:18248"/>
    </ligandPart>
</feature>
<feature type="site" description="Transition state stabilizer" evidence="1">
    <location>
        <position position="100"/>
    </location>
</feature>
<feature type="cross-link" description="Tryptophyl-tyrosyl-methioninium (Trp-Tyr) (with M-252)" evidence="1">
    <location>
        <begin position="103"/>
        <end position="226"/>
    </location>
</feature>
<feature type="cross-link" description="Tryptophyl-tyrosyl-methioninium (Tyr-Met) (with W-103)" evidence="1">
    <location>
        <begin position="226"/>
        <end position="252"/>
    </location>
</feature>